<feature type="chain" id="PRO_0000281489" description="Zinc import ATP-binding protein ZnuC">
    <location>
        <begin position="1"/>
        <end position="254"/>
    </location>
</feature>
<feature type="domain" description="ABC transporter" evidence="1">
    <location>
        <begin position="5"/>
        <end position="219"/>
    </location>
</feature>
<feature type="region of interest" description="Disordered" evidence="2">
    <location>
        <begin position="233"/>
        <end position="254"/>
    </location>
</feature>
<feature type="compositionally biased region" description="Basic and acidic residues" evidence="2">
    <location>
        <begin position="233"/>
        <end position="242"/>
    </location>
</feature>
<feature type="binding site" evidence="1">
    <location>
        <begin position="37"/>
        <end position="44"/>
    </location>
    <ligand>
        <name>ATP</name>
        <dbReference type="ChEBI" id="CHEBI:30616"/>
    </ligand>
</feature>
<keyword id="KW-0067">ATP-binding</keyword>
<keyword id="KW-0997">Cell inner membrane</keyword>
<keyword id="KW-1003">Cell membrane</keyword>
<keyword id="KW-0406">Ion transport</keyword>
<keyword id="KW-0472">Membrane</keyword>
<keyword id="KW-0547">Nucleotide-binding</keyword>
<keyword id="KW-1185">Reference proteome</keyword>
<keyword id="KW-1278">Translocase</keyword>
<keyword id="KW-0813">Transport</keyword>
<keyword id="KW-0862">Zinc</keyword>
<keyword id="KW-0864">Zinc transport</keyword>
<organism>
    <name type="scientific">Aeromonas hydrophila subsp. hydrophila (strain ATCC 7966 / DSM 30187 / BCRC 13018 / CCUG 14551 / JCM 1027 / KCTC 2358 / NCIMB 9240 / NCTC 8049)</name>
    <dbReference type="NCBI Taxonomy" id="380703"/>
    <lineage>
        <taxon>Bacteria</taxon>
        <taxon>Pseudomonadati</taxon>
        <taxon>Pseudomonadota</taxon>
        <taxon>Gammaproteobacteria</taxon>
        <taxon>Aeromonadales</taxon>
        <taxon>Aeromonadaceae</taxon>
        <taxon>Aeromonas</taxon>
    </lineage>
</organism>
<name>ZNUC_AERHH</name>
<evidence type="ECO:0000255" key="1">
    <source>
        <dbReference type="HAMAP-Rule" id="MF_01725"/>
    </source>
</evidence>
<evidence type="ECO:0000256" key="2">
    <source>
        <dbReference type="SAM" id="MobiDB-lite"/>
    </source>
</evidence>
<gene>
    <name evidence="1" type="primary">znuC</name>
    <name type="ordered locus">AHA_3729</name>
</gene>
<accession>A0KPH6</accession>
<proteinExistence type="inferred from homology"/>
<comment type="function">
    <text evidence="1">Part of the ABC transporter complex ZnuABC involved in zinc import. Responsible for energy coupling to the transport system.</text>
</comment>
<comment type="catalytic activity">
    <reaction evidence="1">
        <text>Zn(2+)(out) + ATP(in) + H2O(in) = Zn(2+)(in) + ADP(in) + phosphate(in) + H(+)(in)</text>
        <dbReference type="Rhea" id="RHEA:29795"/>
        <dbReference type="ChEBI" id="CHEBI:15377"/>
        <dbReference type="ChEBI" id="CHEBI:15378"/>
        <dbReference type="ChEBI" id="CHEBI:29105"/>
        <dbReference type="ChEBI" id="CHEBI:30616"/>
        <dbReference type="ChEBI" id="CHEBI:43474"/>
        <dbReference type="ChEBI" id="CHEBI:456216"/>
        <dbReference type="EC" id="7.2.2.20"/>
    </reaction>
</comment>
<comment type="subunit">
    <text evidence="1">The complex is composed of two ATP-binding proteins (ZnuC), two transmembrane proteins (ZnuB) and a solute-binding protein (ZnuA).</text>
</comment>
<comment type="subcellular location">
    <subcellularLocation>
        <location evidence="1">Cell inner membrane</location>
        <topology evidence="1">Peripheral membrane protein</topology>
    </subcellularLocation>
</comment>
<comment type="similarity">
    <text evidence="1">Belongs to the ABC transporter superfamily. Zinc importer (TC 3.A.1.15.5) family.</text>
</comment>
<sequence>MTQLVELKEVCLSFDGRSVLDKVSFTLNKGKITTLVGPNGAGKSTLSKLVLGLLTPDSGQITRSRDLRVGYVPQRLYLDPTLPLTVRRFLQLGKNGRLSIEEALNRVGAEDLLDNRMQKLSGGEMQRVLLARALLVKPELLVLDEPVQGVDINGQIELYALISQLAAEFNCAVLMVSHDLHLVMASTHEVICLNRHVCCHGEPESVARHPEFARLFGRPEQEVLAVYTHHHHCDGEHHHHEPQVPVIRLPSRNQ</sequence>
<dbReference type="EC" id="7.2.2.20" evidence="1"/>
<dbReference type="EMBL" id="CP000462">
    <property type="protein sequence ID" value="ABK37975.1"/>
    <property type="molecule type" value="Genomic_DNA"/>
</dbReference>
<dbReference type="RefSeq" id="WP_011707444.1">
    <property type="nucleotide sequence ID" value="NC_008570.1"/>
</dbReference>
<dbReference type="RefSeq" id="YP_858177.1">
    <property type="nucleotide sequence ID" value="NC_008570.1"/>
</dbReference>
<dbReference type="SMR" id="A0KPH6"/>
<dbReference type="STRING" id="380703.AHA_3729"/>
<dbReference type="EnsemblBacteria" id="ABK37975">
    <property type="protein sequence ID" value="ABK37975"/>
    <property type="gene ID" value="AHA_3729"/>
</dbReference>
<dbReference type="GeneID" id="4488555"/>
<dbReference type="KEGG" id="aha:AHA_3729"/>
<dbReference type="PATRIC" id="fig|380703.7.peg.3703"/>
<dbReference type="eggNOG" id="COG1121">
    <property type="taxonomic scope" value="Bacteria"/>
</dbReference>
<dbReference type="HOGENOM" id="CLU_000604_1_11_6"/>
<dbReference type="OrthoDB" id="9780942at2"/>
<dbReference type="Proteomes" id="UP000000756">
    <property type="component" value="Chromosome"/>
</dbReference>
<dbReference type="GO" id="GO:0005886">
    <property type="term" value="C:plasma membrane"/>
    <property type="evidence" value="ECO:0007669"/>
    <property type="project" value="UniProtKB-SubCell"/>
</dbReference>
<dbReference type="GO" id="GO:0015633">
    <property type="term" value="F:ABC-type zinc transporter activity"/>
    <property type="evidence" value="ECO:0007669"/>
    <property type="project" value="UniProtKB-EC"/>
</dbReference>
<dbReference type="GO" id="GO:0005524">
    <property type="term" value="F:ATP binding"/>
    <property type="evidence" value="ECO:0007669"/>
    <property type="project" value="UniProtKB-KW"/>
</dbReference>
<dbReference type="GO" id="GO:0016887">
    <property type="term" value="F:ATP hydrolysis activity"/>
    <property type="evidence" value="ECO:0007669"/>
    <property type="project" value="InterPro"/>
</dbReference>
<dbReference type="GO" id="GO:0010043">
    <property type="term" value="P:response to zinc ion"/>
    <property type="evidence" value="ECO:0007669"/>
    <property type="project" value="TreeGrafter"/>
</dbReference>
<dbReference type="CDD" id="cd03235">
    <property type="entry name" value="ABC_Metallic_Cations"/>
    <property type="match status" value="1"/>
</dbReference>
<dbReference type="FunFam" id="3.40.50.300:FF:000392">
    <property type="entry name" value="Zinc import ATP-binding protein ZnuC"/>
    <property type="match status" value="1"/>
</dbReference>
<dbReference type="Gene3D" id="3.40.50.300">
    <property type="entry name" value="P-loop containing nucleotide triphosphate hydrolases"/>
    <property type="match status" value="1"/>
</dbReference>
<dbReference type="InterPro" id="IPR003593">
    <property type="entry name" value="AAA+_ATPase"/>
</dbReference>
<dbReference type="InterPro" id="IPR003439">
    <property type="entry name" value="ABC_transporter-like_ATP-bd"/>
</dbReference>
<dbReference type="InterPro" id="IPR017871">
    <property type="entry name" value="ABC_transporter-like_CS"/>
</dbReference>
<dbReference type="InterPro" id="IPR050153">
    <property type="entry name" value="Metal_Ion_Import_ABC"/>
</dbReference>
<dbReference type="InterPro" id="IPR027417">
    <property type="entry name" value="P-loop_NTPase"/>
</dbReference>
<dbReference type="NCBIfam" id="NF007090">
    <property type="entry name" value="PRK09544.1"/>
    <property type="match status" value="1"/>
</dbReference>
<dbReference type="PANTHER" id="PTHR42734">
    <property type="entry name" value="METAL TRANSPORT SYSTEM ATP-BINDING PROTEIN TM_0124-RELATED"/>
    <property type="match status" value="1"/>
</dbReference>
<dbReference type="PANTHER" id="PTHR42734:SF9">
    <property type="entry name" value="ZINC IMPORT ATP-BINDING PROTEIN ZNUC"/>
    <property type="match status" value="1"/>
</dbReference>
<dbReference type="Pfam" id="PF00005">
    <property type="entry name" value="ABC_tran"/>
    <property type="match status" value="1"/>
</dbReference>
<dbReference type="SMART" id="SM00382">
    <property type="entry name" value="AAA"/>
    <property type="match status" value="1"/>
</dbReference>
<dbReference type="SUPFAM" id="SSF52540">
    <property type="entry name" value="P-loop containing nucleoside triphosphate hydrolases"/>
    <property type="match status" value="1"/>
</dbReference>
<dbReference type="PROSITE" id="PS00211">
    <property type="entry name" value="ABC_TRANSPORTER_1"/>
    <property type="match status" value="1"/>
</dbReference>
<dbReference type="PROSITE" id="PS50893">
    <property type="entry name" value="ABC_TRANSPORTER_2"/>
    <property type="match status" value="1"/>
</dbReference>
<dbReference type="PROSITE" id="PS51298">
    <property type="entry name" value="ZNUC"/>
    <property type="match status" value="1"/>
</dbReference>
<reference key="1">
    <citation type="journal article" date="2006" name="J. Bacteriol.">
        <title>Genome sequence of Aeromonas hydrophila ATCC 7966T: jack of all trades.</title>
        <authorList>
            <person name="Seshadri R."/>
            <person name="Joseph S.W."/>
            <person name="Chopra A.K."/>
            <person name="Sha J."/>
            <person name="Shaw J."/>
            <person name="Graf J."/>
            <person name="Haft D.H."/>
            <person name="Wu M."/>
            <person name="Ren Q."/>
            <person name="Rosovitz M.J."/>
            <person name="Madupu R."/>
            <person name="Tallon L."/>
            <person name="Kim M."/>
            <person name="Jin S."/>
            <person name="Vuong H."/>
            <person name="Stine O.C."/>
            <person name="Ali A."/>
            <person name="Horneman A.J."/>
            <person name="Heidelberg J.F."/>
        </authorList>
    </citation>
    <scope>NUCLEOTIDE SEQUENCE [LARGE SCALE GENOMIC DNA]</scope>
    <source>
        <strain>ATCC 7966 / DSM 30187 / BCRC 13018 / CCUG 14551 / JCM 1027 / KCTC 2358 / NCIMB 9240 / NCTC 8049</strain>
    </source>
</reference>
<protein>
    <recommendedName>
        <fullName evidence="1">Zinc import ATP-binding protein ZnuC</fullName>
        <ecNumber evidence="1">7.2.2.20</ecNumber>
    </recommendedName>
</protein>